<accession>Q8DK23</accession>
<reference key="1">
    <citation type="submission" date="2008-11" db="EMBL/GenBank/DDBJ databases">
        <title>Expression, purification and characterization of a sucrose synthase gene from Thermosynechococcus elongatus BP-1.</title>
        <authorList>
            <person name="Torres L.L."/>
            <person name="Salerno G.L."/>
        </authorList>
    </citation>
    <scope>NUCLEOTIDE SEQUENCE [GENOMIC DNA]</scope>
    <source>
        <strain>NIES-2133 / IAM M-273 / BP-1</strain>
    </source>
</reference>
<reference key="2">
    <citation type="journal article" date="2002" name="DNA Res.">
        <title>Complete genome structure of the thermophilic cyanobacterium Thermosynechococcus elongatus BP-1.</title>
        <authorList>
            <person name="Nakamura Y."/>
            <person name="Kaneko T."/>
            <person name="Sato S."/>
            <person name="Ikeuchi M."/>
            <person name="Katoh H."/>
            <person name="Sasamoto S."/>
            <person name="Watanabe A."/>
            <person name="Iriguchi M."/>
            <person name="Kawashima K."/>
            <person name="Kimura T."/>
            <person name="Kishida Y."/>
            <person name="Kiyokawa C."/>
            <person name="Kohara M."/>
            <person name="Matsumoto M."/>
            <person name="Matsuno A."/>
            <person name="Nakazaki N."/>
            <person name="Shimpo S."/>
            <person name="Sugimoto M."/>
            <person name="Takeuchi C."/>
            <person name="Yamada M."/>
            <person name="Tabata S."/>
        </authorList>
    </citation>
    <scope>NUCLEOTIDE SEQUENCE [LARGE SCALE GENOMIC DNA]</scope>
    <source>
        <strain>NIES-2133 / IAM M-273 / BP-1</strain>
    </source>
</reference>
<reference key="3">
    <citation type="journal article" date="2013" name="FEBS Lett.">
        <title>The unique nucleotide specificity of the sucrose synthase from Thermosynechococcus elongatus.</title>
        <authorList>
            <person name="Figueroa C.M."/>
            <person name="Asencion Diez M.D."/>
            <person name="Kuhn M.L."/>
            <person name="McEwen S."/>
            <person name="Salerno G.L."/>
            <person name="Iglesias A.A."/>
            <person name="Ballicora M.A."/>
        </authorList>
    </citation>
    <scope>FUNCTION</scope>
    <scope>CATALYTIC ACTIVITY</scope>
    <scope>BIOPHYSICOCHEMICAL PROPERTIES</scope>
    <scope>SUBUNIT</scope>
    <source>
        <strain>NIES-2133 / IAM M-273 / BP-1</strain>
    </source>
</reference>
<keyword id="KW-0328">Glycosyltransferase</keyword>
<keyword id="KW-1185">Reference proteome</keyword>
<keyword id="KW-0808">Transferase</keyword>
<protein>
    <recommendedName>
        <fullName>Sucrose synthase</fullName>
        <shortName>SuSyTe</shortName>
        <ecNumber evidence="2">2.4.1.13</ecNumber>
    </recommendedName>
</protein>
<evidence type="ECO:0000250" key="1">
    <source>
        <dbReference type="UniProtKB" id="P49040"/>
    </source>
</evidence>
<evidence type="ECO:0000269" key="2">
    <source>
    </source>
</evidence>
<evidence type="ECO:0000303" key="3">
    <source>
    </source>
</evidence>
<evidence type="ECO:0000305" key="4"/>
<evidence type="ECO:0000305" key="5">
    <source>
    </source>
</evidence>
<dbReference type="EC" id="2.4.1.13" evidence="2"/>
<dbReference type="EMBL" id="FJ457909">
    <property type="protein sequence ID" value="ACS32312.1"/>
    <property type="molecule type" value="Genomic_DNA"/>
</dbReference>
<dbReference type="EMBL" id="BA000039">
    <property type="protein sequence ID" value="BAC08600.1"/>
    <property type="molecule type" value="Genomic_DNA"/>
</dbReference>
<dbReference type="RefSeq" id="NP_681838.1">
    <property type="nucleotide sequence ID" value="NC_004113.1"/>
</dbReference>
<dbReference type="RefSeq" id="WP_011056890.1">
    <property type="nucleotide sequence ID" value="NC_004113.1"/>
</dbReference>
<dbReference type="SMR" id="Q8DK23"/>
<dbReference type="STRING" id="197221.gene:10747640"/>
<dbReference type="CAZy" id="GT4">
    <property type="family name" value="Glycosyltransferase Family 4"/>
</dbReference>
<dbReference type="EnsemblBacteria" id="BAC08600">
    <property type="protein sequence ID" value="BAC08600"/>
    <property type="gene ID" value="BAC08600"/>
</dbReference>
<dbReference type="KEGG" id="tel:tlr1047"/>
<dbReference type="PATRIC" id="fig|197221.4.peg.1100"/>
<dbReference type="eggNOG" id="COG0438">
    <property type="taxonomic scope" value="Bacteria"/>
</dbReference>
<dbReference type="Proteomes" id="UP000000440">
    <property type="component" value="Chromosome"/>
</dbReference>
<dbReference type="GO" id="GO:0016157">
    <property type="term" value="F:sucrose synthase activity"/>
    <property type="evidence" value="ECO:0007669"/>
    <property type="project" value="UniProtKB-EC"/>
</dbReference>
<dbReference type="GO" id="GO:0005985">
    <property type="term" value="P:sucrose metabolic process"/>
    <property type="evidence" value="ECO:0007669"/>
    <property type="project" value="InterPro"/>
</dbReference>
<dbReference type="Gene3D" id="1.20.120.1230">
    <property type="match status" value="1"/>
</dbReference>
<dbReference type="Gene3D" id="3.10.450.330">
    <property type="match status" value="1"/>
</dbReference>
<dbReference type="Gene3D" id="3.40.50.2000">
    <property type="entry name" value="Glycogen Phosphorylase B"/>
    <property type="match status" value="2"/>
</dbReference>
<dbReference type="InterPro" id="IPR001296">
    <property type="entry name" value="Glyco_trans_1"/>
</dbReference>
<dbReference type="InterPro" id="IPR000368">
    <property type="entry name" value="Sucrose_synth_GT-B1"/>
</dbReference>
<dbReference type="InterPro" id="IPR012820">
    <property type="entry name" value="Sucrose_synthase_pln/cyn"/>
</dbReference>
<dbReference type="InterPro" id="IPR056736">
    <property type="entry name" value="SUS_EPBD"/>
</dbReference>
<dbReference type="InterPro" id="IPR056735">
    <property type="entry name" value="SUS_N"/>
</dbReference>
<dbReference type="NCBIfam" id="TIGR02470">
    <property type="entry name" value="sucr_synth"/>
    <property type="match status" value="1"/>
</dbReference>
<dbReference type="PANTHER" id="PTHR45839">
    <property type="match status" value="1"/>
</dbReference>
<dbReference type="PANTHER" id="PTHR45839:SF7">
    <property type="entry name" value="SUCROSE SYNTHASE 1"/>
    <property type="match status" value="1"/>
</dbReference>
<dbReference type="Pfam" id="PF00534">
    <property type="entry name" value="Glycos_transf_1"/>
    <property type="match status" value="1"/>
</dbReference>
<dbReference type="Pfam" id="PF00862">
    <property type="entry name" value="GT-B_Sucrose_synth"/>
    <property type="match status" value="1"/>
</dbReference>
<dbReference type="Pfam" id="PF24862">
    <property type="entry name" value="SUS_EPBD"/>
    <property type="match status" value="1"/>
</dbReference>
<dbReference type="Pfam" id="PF24861">
    <property type="entry name" value="SUS_N"/>
    <property type="match status" value="1"/>
</dbReference>
<dbReference type="SUPFAM" id="SSF53756">
    <property type="entry name" value="UDP-Glycosyltransferase/glycogen phosphorylase"/>
    <property type="match status" value="1"/>
</dbReference>
<organism>
    <name type="scientific">Thermosynechococcus vestitus (strain NIES-2133 / IAM M-273 / BP-1)</name>
    <dbReference type="NCBI Taxonomy" id="197221"/>
    <lineage>
        <taxon>Bacteria</taxon>
        <taxon>Bacillati</taxon>
        <taxon>Cyanobacteriota</taxon>
        <taxon>Cyanophyceae</taxon>
        <taxon>Acaryochloridales</taxon>
        <taxon>Thermosynechococcaceae</taxon>
        <taxon>Thermosynechococcus</taxon>
    </lineage>
</organism>
<name>SUS_THEVB</name>
<comment type="function">
    <text evidence="2 5">Catalyzes the reversible conversion of sucrose and a nucleotide disphosphate (NDP) into fructose and NDP-glucose; although the reaction is freely reversible in vitro, the physiological reaction seems to be sucrose cleavage. Unlike characterized plant enzymes prefers ADP as a cosubstrate, whereas plants prefer UDP (PubMed:23196182). Its preference for ADP over UDP suggests it may directly link sucrose and glycogen metabolism (Probable).</text>
</comment>
<comment type="catalytic activity">
    <reaction evidence="2">
        <text>an NDP-alpha-D-glucose + D-fructose = a ribonucleoside 5'-diphosphate + sucrose + H(+)</text>
        <dbReference type="Rhea" id="RHEA:16241"/>
        <dbReference type="ChEBI" id="CHEBI:15378"/>
        <dbReference type="ChEBI" id="CHEBI:17992"/>
        <dbReference type="ChEBI" id="CHEBI:37721"/>
        <dbReference type="ChEBI" id="CHEBI:57930"/>
        <dbReference type="ChEBI" id="CHEBI:76533"/>
        <dbReference type="EC" id="2.4.1.13"/>
    </reaction>
</comment>
<comment type="catalytic activity">
    <reaction evidence="2">
        <text>ADP-alpha-D-glucose + D-fructose = sucrose + ADP + H(+)</text>
        <dbReference type="Rhea" id="RHEA:55080"/>
        <dbReference type="ChEBI" id="CHEBI:15378"/>
        <dbReference type="ChEBI" id="CHEBI:17992"/>
        <dbReference type="ChEBI" id="CHEBI:37721"/>
        <dbReference type="ChEBI" id="CHEBI:57498"/>
        <dbReference type="ChEBI" id="CHEBI:456216"/>
        <dbReference type="EC" id="2.4.1.13"/>
    </reaction>
</comment>
<comment type="biophysicochemical properties">
    <kinetics>
        <KM evidence="2">0.033 mM for ADP-glucose for sucrose synthesis, pH 7.0</KM>
        <KM evidence="2">1.7 mM for UDP-glucose for sucrose synthesis, pH 7.0</KM>
        <Vmax evidence="2">1.1 umol/min/mg enzyme for sucrose synthesis with ADP-glucose, pH 7.0</Vmax>
        <Vmax evidence="2">2.9 umol/min/mg enzyme for sucrose synthesis with UDP-glucose, pH 7.0</Vmax>
        <Vmax evidence="2">1.28 umol/min/mg enzyme for sucrose cleavage with ADP, pH 7.0</Vmax>
        <Vmax evidence="2">3.8 umol/min/mg enzyme for sucrose cleavage with CDP, pH 7.0</Vmax>
        <Vmax evidence="2">3.9 umol/min/mg enzyme for sucrose cleavage with GDP, pH 7.0</Vmax>
        <Vmax evidence="2">1.41 umol/min/mg enzyme for sucrose cleavage with TDP, pH 7.0</Vmax>
        <Vmax evidence="2">2.2 umol/min/mg enzyme for sucrose cleavage with UDP, pH 7.0</Vmax>
        <text>kcat/KM for sucrose synthesis is 70094 for ADP-gluce and 2673 for UDP-glucose.</text>
    </kinetics>
    <phDependence>
        <text evidence="2">Optimum pH is 7-9 for sucrose cleavage with ADP as substrate.</text>
    </phDependence>
    <temperatureDependence>
        <text evidence="2">Optimum temperature is 60 degrees Celsius for sucrose degradation with UDP and 70 degrees Celsius with ADP. The enzyme remains stable for 10 minutes at 50 degrees Celsius, while addition of ADP, UDP or sucrose enhances thermal stability by 5 degrees Celsius.</text>
    </temperatureDependence>
</comment>
<comment type="subunit">
    <text evidence="5">Probably a homotetramer (PubMed:23196182).</text>
</comment>
<comment type="similarity">
    <text evidence="4">Belongs to the glycosyltransferase 1 family.</text>
</comment>
<feature type="chain" id="PRO_0000442259" description="Sucrose synthase">
    <location>
        <begin position="1"/>
        <end position="808"/>
    </location>
</feature>
<feature type="region of interest" description="GT-B glycosyltransferase" evidence="1">
    <location>
        <begin position="271"/>
        <end position="753"/>
    </location>
</feature>
<gene>
    <name evidence="3" type="primary">susA</name>
    <name type="ordered locus">tlr1047</name>
</gene>
<proteinExistence type="evidence at protein level"/>
<sequence>MTCVLLKAVVESDERADLRQFSRILQLGEKRYLLRNDILDAFADYCRDQERPVPPPSESRLSKLVFYTQEIIVDNESLCWIVRPRIAQQEVCRLLVEDLTIVPMTIPELLDLRDRLVNHYHPNEGDVFEIDVQPFYDYSPIIRDAKNIGKGVEFLNRYLSSKLFQDPRQWQQNLFNFLRIHRYNGYQLLINERIRSPQHLSEQVKQALVVLSDRPPTEAYSEFRFELQNLGFEPGWGNTVARVRDTLEILDQLLDSPDHQVLEAFVSRIPMLFRIALISPHGWFGQEGVLGRPDTGGQVVYILDQVKSLEKQMREDLELAGLGVLEAQPKIIVLTRLIPNAEGTLCNQRLEKIYGTNDAWILRVPFREFNPKVTQNWISRFEIWPYLETFAIDAERELRAEFGHVPDLIIGNYSDGNLVAFLLARRLKVTQCNIAHALEKSKYLFSNLYWQDLEDKYHFSLQFTADLIAMNAANFIISSTYQEIVGTPDSIGQYESYQSFTMPDLYHVVNGIELFSPKFNVVPPGVNEQVYFPYYHYTERLEGDRQRLEELLFTLEDPQQIYGYLEAPEKRPLFSMARLDRIKNLTGLAEAFGRSKALQERCNLILVAGKLRTADSSDREEIAEIEKLYQIIHQYNLHGKIRWLGIRLPKADSGEIYRIIADRQGIFVQPALFEAFGLTILEAMISGLPTFGTRFGGPLEIIQDGVNGFYINPTHLEEMAETIVRFLEACDRDPQEWQRISKAGIERVYSTYTWKIHCTRLLSLAKIYGFWNFSSQENREDMMRYMEALFHLLYKPRAQALLAEHLQR</sequence>